<feature type="chain" id="PRO_0000091148" description="Elongation factor G">
    <location>
        <begin position="1"/>
        <end position="695"/>
    </location>
</feature>
<feature type="domain" description="tr-type G">
    <location>
        <begin position="8"/>
        <end position="282"/>
    </location>
</feature>
<feature type="binding site" evidence="1">
    <location>
        <begin position="17"/>
        <end position="24"/>
    </location>
    <ligand>
        <name>GTP</name>
        <dbReference type="ChEBI" id="CHEBI:37565"/>
    </ligand>
</feature>
<feature type="binding site" evidence="1">
    <location>
        <begin position="81"/>
        <end position="85"/>
    </location>
    <ligand>
        <name>GTP</name>
        <dbReference type="ChEBI" id="CHEBI:37565"/>
    </ligand>
</feature>
<feature type="binding site" evidence="1">
    <location>
        <begin position="135"/>
        <end position="138"/>
    </location>
    <ligand>
        <name>GTP</name>
        <dbReference type="ChEBI" id="CHEBI:37565"/>
    </ligand>
</feature>
<sequence length="695" mass="76850">MAREFSLEKTRNIGIMAHIDAGKTTTTERILFYTGRIHKIGETHEGASQMDWMEQEQERGITITSAATTAQWKGYRVNIIDTPGHVDFTVEVERSLRVLDGAVAVLDAQSGVEPQTETVWRQATTYGVPRVVFVNKMDKIGADFLYSVGTLHERLAANAHPIQLPIGAEDTFEGIIDLIEMNALYYEDDLGNDPHIKEIPADLKDLADEYRGKLVEAVAELDEELMMKYLEGEEITKEELKAGIRKGTLNVEFYPVVCGTAFKNKGVQPMLDAVLDYLPAPTDVPAINGVLPDGEEAARHADDSEPFSSLAFKVMTDPYVGRLTFFRVYSGTLNSGSYVQNSTKGKRERVGRILQMHANHREEISIVYAGDIAAAVGLKDTTTGDTLCDEKEQIILESMEFPEPVIQVAIEPKSKADQDKMGQALAKLAEEDPTFRAETDQETGQTLISGMGELHLDILVDRMRREFRVEANVGDPQVSYRETFRKSAQVEGKFVRQSGGRGQYGHVWIEFGPNEEGKGFEFENAIVGGVVPREYIPAVQAGLEGALDNGVLAGYPLIDIKAKLYDGSYHDVDSNEMAFKVAASMALRNAAKKCDPVILEPMMAVEVVIPEEYLGDIMGNITSRRGRVDGMEARGNAQVVRAFVPLANMFGYATHLRSGTQGRGVYTMQFDHYEEVPKSIAEEIIKANGGNNKED</sequence>
<reference key="1">
    <citation type="journal article" date="2001" name="Science">
        <title>Comparative genomics of Listeria species.</title>
        <authorList>
            <person name="Glaser P."/>
            <person name="Frangeul L."/>
            <person name="Buchrieser C."/>
            <person name="Rusniok C."/>
            <person name="Amend A."/>
            <person name="Baquero F."/>
            <person name="Berche P."/>
            <person name="Bloecker H."/>
            <person name="Brandt P."/>
            <person name="Chakraborty T."/>
            <person name="Charbit A."/>
            <person name="Chetouani F."/>
            <person name="Couve E."/>
            <person name="de Daruvar A."/>
            <person name="Dehoux P."/>
            <person name="Domann E."/>
            <person name="Dominguez-Bernal G."/>
            <person name="Duchaud E."/>
            <person name="Durant L."/>
            <person name="Dussurget O."/>
            <person name="Entian K.-D."/>
            <person name="Fsihi H."/>
            <person name="Garcia-del Portillo F."/>
            <person name="Garrido P."/>
            <person name="Gautier L."/>
            <person name="Goebel W."/>
            <person name="Gomez-Lopez N."/>
            <person name="Hain T."/>
            <person name="Hauf J."/>
            <person name="Jackson D."/>
            <person name="Jones L.-M."/>
            <person name="Kaerst U."/>
            <person name="Kreft J."/>
            <person name="Kuhn M."/>
            <person name="Kunst F."/>
            <person name="Kurapkat G."/>
            <person name="Madueno E."/>
            <person name="Maitournam A."/>
            <person name="Mata Vicente J."/>
            <person name="Ng E."/>
            <person name="Nedjari H."/>
            <person name="Nordsiek G."/>
            <person name="Novella S."/>
            <person name="de Pablos B."/>
            <person name="Perez-Diaz J.-C."/>
            <person name="Purcell R."/>
            <person name="Remmel B."/>
            <person name="Rose M."/>
            <person name="Schlueter T."/>
            <person name="Simoes N."/>
            <person name="Tierrez A."/>
            <person name="Vazquez-Boland J.-A."/>
            <person name="Voss H."/>
            <person name="Wehland J."/>
            <person name="Cossart P."/>
        </authorList>
    </citation>
    <scope>NUCLEOTIDE SEQUENCE [LARGE SCALE GENOMIC DNA]</scope>
    <source>
        <strain>ATCC BAA-679 / EGD-e</strain>
    </source>
</reference>
<accession>Q8Y421</accession>
<organism>
    <name type="scientific">Listeria monocytogenes serovar 1/2a (strain ATCC BAA-679 / EGD-e)</name>
    <dbReference type="NCBI Taxonomy" id="169963"/>
    <lineage>
        <taxon>Bacteria</taxon>
        <taxon>Bacillati</taxon>
        <taxon>Bacillota</taxon>
        <taxon>Bacilli</taxon>
        <taxon>Bacillales</taxon>
        <taxon>Listeriaceae</taxon>
        <taxon>Listeria</taxon>
    </lineage>
</organism>
<proteinExistence type="inferred from homology"/>
<gene>
    <name evidence="1" type="primary">fusA</name>
    <name type="synonym">fus</name>
    <name type="ordered locus">lmo2654</name>
</gene>
<comment type="function">
    <text evidence="1">Catalyzes the GTP-dependent ribosomal translocation step during translation elongation. During this step, the ribosome changes from the pre-translocational (PRE) to the post-translocational (POST) state as the newly formed A-site-bound peptidyl-tRNA and P-site-bound deacylated tRNA move to the P and E sites, respectively. Catalyzes the coordinated movement of the two tRNA molecules, the mRNA and conformational changes in the ribosome.</text>
</comment>
<comment type="subcellular location">
    <subcellularLocation>
        <location evidence="1">Cytoplasm</location>
    </subcellularLocation>
</comment>
<comment type="similarity">
    <text evidence="1">Belongs to the TRAFAC class translation factor GTPase superfamily. Classic translation factor GTPase family. EF-G/EF-2 subfamily.</text>
</comment>
<keyword id="KW-0963">Cytoplasm</keyword>
<keyword id="KW-0251">Elongation factor</keyword>
<keyword id="KW-0342">GTP-binding</keyword>
<keyword id="KW-0547">Nucleotide-binding</keyword>
<keyword id="KW-0648">Protein biosynthesis</keyword>
<keyword id="KW-1185">Reference proteome</keyword>
<evidence type="ECO:0000255" key="1">
    <source>
        <dbReference type="HAMAP-Rule" id="MF_00054"/>
    </source>
</evidence>
<dbReference type="EMBL" id="AL591984">
    <property type="protein sequence ID" value="CAD00867.1"/>
    <property type="molecule type" value="Genomic_DNA"/>
</dbReference>
<dbReference type="PIR" id="AE1406">
    <property type="entry name" value="AE1406"/>
</dbReference>
<dbReference type="RefSeq" id="NP_466176.1">
    <property type="nucleotide sequence ID" value="NC_003210.1"/>
</dbReference>
<dbReference type="RefSeq" id="WP_003724965.1">
    <property type="nucleotide sequence ID" value="NZ_CP149495.1"/>
</dbReference>
<dbReference type="SMR" id="Q8Y421"/>
<dbReference type="STRING" id="169963.gene:17595371"/>
<dbReference type="PaxDb" id="169963-lmo2654"/>
<dbReference type="EnsemblBacteria" id="CAD00867">
    <property type="protein sequence ID" value="CAD00867"/>
    <property type="gene ID" value="CAD00867"/>
</dbReference>
<dbReference type="GeneID" id="87012818"/>
<dbReference type="GeneID" id="986619"/>
<dbReference type="KEGG" id="lmo:lmo2654"/>
<dbReference type="PATRIC" id="fig|169963.11.peg.2720"/>
<dbReference type="eggNOG" id="COG0480">
    <property type="taxonomic scope" value="Bacteria"/>
</dbReference>
<dbReference type="HOGENOM" id="CLU_002794_4_1_9"/>
<dbReference type="OrthoDB" id="9804431at2"/>
<dbReference type="PhylomeDB" id="Q8Y421"/>
<dbReference type="BioCyc" id="LMON169963:LMO2654-MONOMER"/>
<dbReference type="Proteomes" id="UP000000817">
    <property type="component" value="Chromosome"/>
</dbReference>
<dbReference type="GO" id="GO:0005737">
    <property type="term" value="C:cytoplasm"/>
    <property type="evidence" value="ECO:0007669"/>
    <property type="project" value="UniProtKB-SubCell"/>
</dbReference>
<dbReference type="GO" id="GO:0005525">
    <property type="term" value="F:GTP binding"/>
    <property type="evidence" value="ECO:0007669"/>
    <property type="project" value="UniProtKB-UniRule"/>
</dbReference>
<dbReference type="GO" id="GO:0003924">
    <property type="term" value="F:GTPase activity"/>
    <property type="evidence" value="ECO:0007669"/>
    <property type="project" value="InterPro"/>
</dbReference>
<dbReference type="GO" id="GO:0003746">
    <property type="term" value="F:translation elongation factor activity"/>
    <property type="evidence" value="ECO:0007669"/>
    <property type="project" value="UniProtKB-UniRule"/>
</dbReference>
<dbReference type="GO" id="GO:0032790">
    <property type="term" value="P:ribosome disassembly"/>
    <property type="evidence" value="ECO:0000318"/>
    <property type="project" value="GO_Central"/>
</dbReference>
<dbReference type="CDD" id="cd01886">
    <property type="entry name" value="EF-G"/>
    <property type="match status" value="1"/>
</dbReference>
<dbReference type="CDD" id="cd16262">
    <property type="entry name" value="EFG_III"/>
    <property type="match status" value="1"/>
</dbReference>
<dbReference type="CDD" id="cd01434">
    <property type="entry name" value="EFG_mtEFG1_IV"/>
    <property type="match status" value="1"/>
</dbReference>
<dbReference type="CDD" id="cd03713">
    <property type="entry name" value="EFG_mtEFG_C"/>
    <property type="match status" value="1"/>
</dbReference>
<dbReference type="CDD" id="cd04088">
    <property type="entry name" value="EFG_mtEFG_II"/>
    <property type="match status" value="1"/>
</dbReference>
<dbReference type="FunFam" id="2.40.30.10:FF:000006">
    <property type="entry name" value="Elongation factor G"/>
    <property type="match status" value="1"/>
</dbReference>
<dbReference type="FunFam" id="3.30.230.10:FF:000003">
    <property type="entry name" value="Elongation factor G"/>
    <property type="match status" value="1"/>
</dbReference>
<dbReference type="FunFam" id="3.30.70.240:FF:000001">
    <property type="entry name" value="Elongation factor G"/>
    <property type="match status" value="1"/>
</dbReference>
<dbReference type="FunFam" id="3.30.70.870:FF:000001">
    <property type="entry name" value="Elongation factor G"/>
    <property type="match status" value="1"/>
</dbReference>
<dbReference type="FunFam" id="3.40.50.300:FF:000029">
    <property type="entry name" value="Elongation factor G"/>
    <property type="match status" value="1"/>
</dbReference>
<dbReference type="Gene3D" id="3.30.230.10">
    <property type="match status" value="1"/>
</dbReference>
<dbReference type="Gene3D" id="3.30.70.240">
    <property type="match status" value="1"/>
</dbReference>
<dbReference type="Gene3D" id="3.30.70.870">
    <property type="entry name" value="Elongation Factor G (Translational Gtpase), domain 3"/>
    <property type="match status" value="1"/>
</dbReference>
<dbReference type="Gene3D" id="3.40.50.300">
    <property type="entry name" value="P-loop containing nucleotide triphosphate hydrolases"/>
    <property type="match status" value="1"/>
</dbReference>
<dbReference type="Gene3D" id="2.40.30.10">
    <property type="entry name" value="Translation factors"/>
    <property type="match status" value="1"/>
</dbReference>
<dbReference type="HAMAP" id="MF_00054_B">
    <property type="entry name" value="EF_G_EF_2_B"/>
    <property type="match status" value="1"/>
</dbReference>
<dbReference type="InterPro" id="IPR041095">
    <property type="entry name" value="EFG_II"/>
</dbReference>
<dbReference type="InterPro" id="IPR009022">
    <property type="entry name" value="EFG_III"/>
</dbReference>
<dbReference type="InterPro" id="IPR035647">
    <property type="entry name" value="EFG_III/V"/>
</dbReference>
<dbReference type="InterPro" id="IPR047872">
    <property type="entry name" value="EFG_IV"/>
</dbReference>
<dbReference type="InterPro" id="IPR035649">
    <property type="entry name" value="EFG_V"/>
</dbReference>
<dbReference type="InterPro" id="IPR000640">
    <property type="entry name" value="EFG_V-like"/>
</dbReference>
<dbReference type="InterPro" id="IPR004161">
    <property type="entry name" value="EFTu-like_2"/>
</dbReference>
<dbReference type="InterPro" id="IPR031157">
    <property type="entry name" value="G_TR_CS"/>
</dbReference>
<dbReference type="InterPro" id="IPR027417">
    <property type="entry name" value="P-loop_NTPase"/>
</dbReference>
<dbReference type="InterPro" id="IPR020568">
    <property type="entry name" value="Ribosomal_Su5_D2-typ_SF"/>
</dbReference>
<dbReference type="InterPro" id="IPR014721">
    <property type="entry name" value="Ribsml_uS5_D2-typ_fold_subgr"/>
</dbReference>
<dbReference type="InterPro" id="IPR005225">
    <property type="entry name" value="Small_GTP-bd"/>
</dbReference>
<dbReference type="InterPro" id="IPR000795">
    <property type="entry name" value="T_Tr_GTP-bd_dom"/>
</dbReference>
<dbReference type="InterPro" id="IPR009000">
    <property type="entry name" value="Transl_B-barrel_sf"/>
</dbReference>
<dbReference type="InterPro" id="IPR004540">
    <property type="entry name" value="Transl_elong_EFG/EF2"/>
</dbReference>
<dbReference type="InterPro" id="IPR005517">
    <property type="entry name" value="Transl_elong_EFG/EF2_IV"/>
</dbReference>
<dbReference type="NCBIfam" id="TIGR00484">
    <property type="entry name" value="EF-G"/>
    <property type="match status" value="1"/>
</dbReference>
<dbReference type="NCBIfam" id="NF009379">
    <property type="entry name" value="PRK12740.1-3"/>
    <property type="match status" value="1"/>
</dbReference>
<dbReference type="NCBIfam" id="NF009381">
    <property type="entry name" value="PRK12740.1-5"/>
    <property type="match status" value="1"/>
</dbReference>
<dbReference type="NCBIfam" id="TIGR00231">
    <property type="entry name" value="small_GTP"/>
    <property type="match status" value="1"/>
</dbReference>
<dbReference type="PANTHER" id="PTHR43261:SF1">
    <property type="entry name" value="RIBOSOME-RELEASING FACTOR 2, MITOCHONDRIAL"/>
    <property type="match status" value="1"/>
</dbReference>
<dbReference type="PANTHER" id="PTHR43261">
    <property type="entry name" value="TRANSLATION ELONGATION FACTOR G-RELATED"/>
    <property type="match status" value="1"/>
</dbReference>
<dbReference type="Pfam" id="PF00679">
    <property type="entry name" value="EFG_C"/>
    <property type="match status" value="1"/>
</dbReference>
<dbReference type="Pfam" id="PF14492">
    <property type="entry name" value="EFG_III"/>
    <property type="match status" value="1"/>
</dbReference>
<dbReference type="Pfam" id="PF03764">
    <property type="entry name" value="EFG_IV"/>
    <property type="match status" value="1"/>
</dbReference>
<dbReference type="Pfam" id="PF00009">
    <property type="entry name" value="GTP_EFTU"/>
    <property type="match status" value="1"/>
</dbReference>
<dbReference type="Pfam" id="PF03144">
    <property type="entry name" value="GTP_EFTU_D2"/>
    <property type="match status" value="1"/>
</dbReference>
<dbReference type="PRINTS" id="PR00315">
    <property type="entry name" value="ELONGATNFCT"/>
</dbReference>
<dbReference type="SMART" id="SM00838">
    <property type="entry name" value="EFG_C"/>
    <property type="match status" value="1"/>
</dbReference>
<dbReference type="SMART" id="SM00889">
    <property type="entry name" value="EFG_IV"/>
    <property type="match status" value="1"/>
</dbReference>
<dbReference type="SUPFAM" id="SSF54980">
    <property type="entry name" value="EF-G C-terminal domain-like"/>
    <property type="match status" value="2"/>
</dbReference>
<dbReference type="SUPFAM" id="SSF52540">
    <property type="entry name" value="P-loop containing nucleoside triphosphate hydrolases"/>
    <property type="match status" value="1"/>
</dbReference>
<dbReference type="SUPFAM" id="SSF54211">
    <property type="entry name" value="Ribosomal protein S5 domain 2-like"/>
    <property type="match status" value="1"/>
</dbReference>
<dbReference type="SUPFAM" id="SSF50447">
    <property type="entry name" value="Translation proteins"/>
    <property type="match status" value="1"/>
</dbReference>
<dbReference type="PROSITE" id="PS00301">
    <property type="entry name" value="G_TR_1"/>
    <property type="match status" value="1"/>
</dbReference>
<dbReference type="PROSITE" id="PS51722">
    <property type="entry name" value="G_TR_2"/>
    <property type="match status" value="1"/>
</dbReference>
<protein>
    <recommendedName>
        <fullName evidence="1">Elongation factor G</fullName>
        <shortName evidence="1">EF-G</shortName>
    </recommendedName>
</protein>
<name>EFG_LISMO</name>